<reference key="1">
    <citation type="journal article" date="1987" name="J. Mol. Biol.">
        <title>Sequences of the genes and polypeptide precursors for two bovine protease inhibitors.</title>
        <authorList>
            <person name="Creighton T.E."/>
            <person name="Charles I.G."/>
        </authorList>
    </citation>
    <scope>NUCLEOTIDE SEQUENCE [GENOMIC DNA / MRNA]</scope>
</reference>
<reference key="2">
    <citation type="journal article" date="1987" name="Cold Spring Harb. Symp. Quant. Biol.">
        <title>Biosynthesis, processing, and evolution of bovine pancreatic trypsin inhibitor.</title>
        <authorList>
            <person name="Creighton T.E."/>
            <person name="Charles I.G."/>
        </authorList>
    </citation>
    <scope>NUCLEOTIDE SEQUENCE [GENOMIC DNA / MRNA]</scope>
</reference>
<reference key="3">
    <citation type="journal article" date="1986" name="Biochem. J.">
        <title>Sequences encoding two trypsin inhibitors occur in strikingly similar genomic environments.</title>
        <authorList>
            <person name="Kingston I.B."/>
            <person name="Anderson S."/>
        </authorList>
    </citation>
    <scope>NUCLEOTIDE SEQUENCE [GENOMIC DNA] OF 34-97</scope>
</reference>
<reference key="4">
    <citation type="journal article" date="1983" name="Proc. Natl. Acad. Sci. U.S.A.">
        <title>Isolation of a genomic clone for bovine pancreatic trypsin inhibitor by using a unique-sequence synthetic DNA probe.</title>
        <authorList>
            <person name="Anderson S."/>
            <person name="Kingston I.B."/>
        </authorList>
    </citation>
    <scope>NUCLEOTIDE SEQUENCE [GENOMIC DNA] OF 34-97</scope>
</reference>
<reference key="5">
    <citation type="journal article" date="1965" name="Biochem. Biophys. Res. Commun.">
        <title>The basic trypsin inhibitor of bovine pancreas. V. The disulfide linkages.</title>
        <authorList>
            <person name="Kassell B."/>
            <person name="Laskowski M."/>
        </authorList>
    </citation>
    <scope>PROTEIN SEQUENCE OF 36-93</scope>
    <scope>DISULFIDE BONDS</scope>
</reference>
<reference key="6">
    <citation type="journal article" date="1966" name="J. Biol. Chem.">
        <title>The disulfide linkages in kallikrein inactivator of bovine lung.</title>
        <authorList>
            <person name="Anderer F.A."/>
            <person name="Hornle S."/>
        </authorList>
    </citation>
    <scope>PROTEIN SEQUENCE OF 36-93</scope>
    <scope>DISULFIDE BONDS</scope>
</reference>
<reference key="7">
    <citation type="journal article" date="1967" name="Bull. Soc. Chim. Biol.">
        <title>Covalent structure of a polypeptide inhibitor of trypsin (Kunitz and Northrop inhibitor).</title>
        <authorList>
            <person name="Chauvet J."/>
            <person name="Acher R."/>
        </authorList>
    </citation>
    <scope>PROTEIN SEQUENCE OF 36-93</scope>
    <scope>DISULFIDE BONDS</scope>
</reference>
<reference key="8">
    <citation type="journal article" date="1968" name="Collect. Czech. Chem. Commun.">
        <title>Sequence of residues 18-20 in pancreatic trypsin inhibitor.</title>
        <authorList>
            <person name="Dlouha V."/>
            <person name="Pospisilova D."/>
            <person name="Meloun B."/>
            <person name="Sorm F."/>
        </authorList>
    </citation>
    <scope>PROTEIN SEQUENCE OF 36-93</scope>
</reference>
<reference key="9">
    <citation type="journal article" date="1990" name="Biochem. Biophys. Res. Commun.">
        <title>Presence of pancreatic trypsin inhibitor in adrenal medullary chromaffin cells.</title>
        <authorList>
            <person name="Lewis R.V."/>
            <person name="Ray P."/>
            <person name="Coguill R."/>
            <person name="Kruggel W."/>
        </authorList>
    </citation>
    <scope>PROTEIN SEQUENCE OF 36-81</scope>
    <source>
        <tissue>Adrenal chromaffin</tissue>
    </source>
</reference>
<reference key="10">
    <citation type="journal article" date="1975" name="Acta Crystallogr. B">
        <title>Crystallographic refinement of the structure of bovine pancreatic trypsin inhibitor at 1.5-A resolution.</title>
        <authorList>
            <person name="Deisenhofer J."/>
            <person name="Steigemann W."/>
        </authorList>
    </citation>
    <scope>X-RAY CRYSTALLOGRAPHY (1.5 ANGSTROMS)</scope>
</reference>
<reference key="11">
    <citation type="journal article" date="1970" name="Naturwissenschaften">
        <title>The basic trypsin inhibitor of bovine pancreas. I. Structure analysis and conformation of the polypeptide chain.</title>
        <authorList>
            <person name="Huber R."/>
            <person name="Kukla D."/>
            <person name="Ruhlmann A."/>
            <person name="Epp O."/>
            <person name="Formanek H."/>
        </authorList>
    </citation>
    <scope>X-RAY CRYSTALLOGRAPHY (2.5 ANGSTROMS)</scope>
</reference>
<reference key="12">
    <citation type="journal article" date="1991" name="J. Mol. Biol.">
        <title>Crystal structure of a Y35G mutant of bovine pancreatic trypsin inhibitor.</title>
        <authorList>
            <person name="Housset D."/>
            <person name="Kim K.-S."/>
            <person name="Fuchs J."/>
            <person name="Woodward C."/>
            <person name="Wlodawer A."/>
        </authorList>
    </citation>
    <scope>X-RAY CRYSTALLOGRAPHY (1.8 ANGSTROMS) OF MUTANT GLY-70</scope>
</reference>
<reference key="13">
    <citation type="journal article" date="1992" name="J. Mol. Biol.">
        <title>Determination of a high-quality nuclear magnetic resonance solution structure of the bovine pancreatic trypsin inhibitor and comparison with three crystal structures.</title>
        <authorList>
            <person name="Berndt K.D."/>
            <person name="Guntert P."/>
            <person name="Orbons L.P.M."/>
            <person name="Wuethrich K."/>
        </authorList>
    </citation>
    <scope>STRUCTURE BY NMR</scope>
</reference>
<feature type="signal peptide" evidence="1">
    <location>
        <begin position="1"/>
        <end position="21"/>
    </location>
</feature>
<feature type="propeptide" id="PRO_0000016852">
    <location>
        <begin position="22"/>
        <end position="35"/>
    </location>
</feature>
<feature type="chain" id="PRO_0000016853" description="Pancreatic trypsin inhibitor">
    <location>
        <begin position="36"/>
        <end position="93"/>
    </location>
</feature>
<feature type="propeptide" id="PRO_0000016854">
    <location>
        <begin position="94"/>
        <end position="100"/>
    </location>
</feature>
<feature type="domain" description="BPTI/Kunitz inhibitor" evidence="2">
    <location>
        <begin position="40"/>
        <end position="90"/>
    </location>
</feature>
<feature type="site" description="Reactive bond for trypsin">
    <location>
        <begin position="50"/>
        <end position="51"/>
    </location>
</feature>
<feature type="disulfide bond">
    <location>
        <begin position="40"/>
        <end position="90"/>
    </location>
</feature>
<feature type="disulfide bond" evidence="2 3">
    <location>
        <begin position="49"/>
        <end position="73"/>
    </location>
</feature>
<feature type="disulfide bond" evidence="2 3">
    <location>
        <begin position="65"/>
        <end position="86"/>
    </location>
</feature>
<feature type="helix" evidence="4">
    <location>
        <begin position="38"/>
        <end position="41"/>
    </location>
</feature>
<feature type="strand" evidence="5">
    <location>
        <begin position="48"/>
        <end position="50"/>
    </location>
</feature>
<feature type="strand" evidence="4">
    <location>
        <begin position="53"/>
        <end position="59"/>
    </location>
</feature>
<feature type="turn" evidence="4">
    <location>
        <begin position="60"/>
        <end position="63"/>
    </location>
</feature>
<feature type="strand" evidence="4">
    <location>
        <begin position="64"/>
        <end position="70"/>
    </location>
</feature>
<feature type="strand" evidence="4">
    <location>
        <begin position="72"/>
        <end position="74"/>
    </location>
</feature>
<feature type="strand" evidence="6">
    <location>
        <begin position="76"/>
        <end position="78"/>
    </location>
</feature>
<feature type="strand" evidence="4">
    <location>
        <begin position="80"/>
        <end position="82"/>
    </location>
</feature>
<feature type="helix" evidence="4">
    <location>
        <begin position="83"/>
        <end position="90"/>
    </location>
</feature>
<organism>
    <name type="scientific">Bos taurus</name>
    <name type="common">Bovine</name>
    <dbReference type="NCBI Taxonomy" id="9913"/>
    <lineage>
        <taxon>Eukaryota</taxon>
        <taxon>Metazoa</taxon>
        <taxon>Chordata</taxon>
        <taxon>Craniata</taxon>
        <taxon>Vertebrata</taxon>
        <taxon>Euteleostomi</taxon>
        <taxon>Mammalia</taxon>
        <taxon>Eutheria</taxon>
        <taxon>Laurasiatheria</taxon>
        <taxon>Artiodactyla</taxon>
        <taxon>Ruminantia</taxon>
        <taxon>Pecora</taxon>
        <taxon>Bovidae</taxon>
        <taxon>Bovinae</taxon>
        <taxon>Bos</taxon>
    </lineage>
</organism>
<dbReference type="EMBL" id="M20934">
    <property type="protein sequence ID" value="AAD13685.1"/>
    <property type="molecule type" value="Genomic_DNA"/>
</dbReference>
<dbReference type="EMBL" id="M20930">
    <property type="protein sequence ID" value="AAD13685.1"/>
    <property type="status" value="JOINED"/>
    <property type="molecule type" value="Genomic_DNA"/>
</dbReference>
<dbReference type="EMBL" id="M20932">
    <property type="protein sequence ID" value="AAD13685.1"/>
    <property type="status" value="JOINED"/>
    <property type="molecule type" value="Genomic_DNA"/>
</dbReference>
<dbReference type="EMBL" id="X03365">
    <property type="protein sequence ID" value="CAA27062.1"/>
    <property type="status" value="ALT_SEQ"/>
    <property type="molecule type" value="Genomic_DNA"/>
</dbReference>
<dbReference type="EMBL" id="X03365">
    <property type="protein sequence ID" value="CAA27063.1"/>
    <property type="molecule type" value="Genomic_DNA"/>
</dbReference>
<dbReference type="EMBL" id="X05274">
    <property type="protein sequence ID" value="CAA28886.1"/>
    <property type="molecule type" value="mRNA"/>
</dbReference>
<dbReference type="PIR" id="S00277">
    <property type="entry name" value="TIBO"/>
</dbReference>
<dbReference type="PDB" id="1AAL">
    <property type="method" value="X-ray"/>
    <property type="resolution" value="1.60 A"/>
    <property type="chains" value="A/B=36-93"/>
</dbReference>
<dbReference type="PDB" id="1B0C">
    <property type="method" value="X-ray"/>
    <property type="resolution" value="2.80 A"/>
    <property type="chains" value="A/B/C/D/E=36-91"/>
</dbReference>
<dbReference type="PDB" id="1BHC">
    <property type="method" value="X-ray"/>
    <property type="resolution" value="2.70 A"/>
    <property type="chains" value="A/B/C/D/E/F/G/H/I/J=36-93"/>
</dbReference>
<dbReference type="PDB" id="1BPI">
    <property type="method" value="X-ray"/>
    <property type="resolution" value="1.09 A"/>
    <property type="chains" value="A=36-93"/>
</dbReference>
<dbReference type="PDB" id="1BPT">
    <property type="method" value="X-ray"/>
    <property type="resolution" value="2.00 A"/>
    <property type="chains" value="A=36-93"/>
</dbReference>
<dbReference type="PDB" id="1BRB">
    <property type="method" value="X-ray"/>
    <property type="resolution" value="2.10 A"/>
    <property type="chains" value="I=36-93"/>
</dbReference>
<dbReference type="PDB" id="1BTH">
    <property type="method" value="X-ray"/>
    <property type="resolution" value="2.30 A"/>
    <property type="chains" value="P/Q=36-93"/>
</dbReference>
<dbReference type="PDB" id="1BTI">
    <property type="method" value="X-ray"/>
    <property type="resolution" value="2.20 A"/>
    <property type="chains" value="A=36-93"/>
</dbReference>
<dbReference type="PDB" id="1BZ5">
    <property type="method" value="X-ray"/>
    <property type="resolution" value="2.58 A"/>
    <property type="chains" value="A/B/C/D/E=36-93"/>
</dbReference>
<dbReference type="PDB" id="1BZX">
    <property type="method" value="X-ray"/>
    <property type="resolution" value="2.10 A"/>
    <property type="chains" value="I=36-93"/>
</dbReference>
<dbReference type="PDB" id="1CBW">
    <property type="method" value="X-ray"/>
    <property type="resolution" value="2.60 A"/>
    <property type="chains" value="D/I=36-93"/>
</dbReference>
<dbReference type="PDB" id="1CO7">
    <property type="method" value="X-ray"/>
    <property type="resolution" value="1.90 A"/>
    <property type="chains" value="I=2-100"/>
</dbReference>
<dbReference type="PDB" id="1D0D">
    <property type="method" value="X-ray"/>
    <property type="resolution" value="1.62 A"/>
    <property type="chains" value="B=36-93"/>
</dbReference>
<dbReference type="PDB" id="1EAW">
    <property type="method" value="X-ray"/>
    <property type="resolution" value="2.93 A"/>
    <property type="chains" value="B/D=36-93"/>
</dbReference>
<dbReference type="PDB" id="1EJM">
    <property type="method" value="X-ray"/>
    <property type="resolution" value="1.85 A"/>
    <property type="chains" value="B/D/F=36-93"/>
</dbReference>
<dbReference type="PDB" id="1F5R">
    <property type="method" value="X-ray"/>
    <property type="resolution" value="1.65 A"/>
    <property type="chains" value="I=36-100"/>
</dbReference>
<dbReference type="PDB" id="1F7Z">
    <property type="method" value="X-ray"/>
    <property type="resolution" value="1.55 A"/>
    <property type="chains" value="I=36-100"/>
</dbReference>
<dbReference type="PDB" id="1FAK">
    <property type="method" value="X-ray"/>
    <property type="resolution" value="2.10 A"/>
    <property type="chains" value="I=37-90"/>
</dbReference>
<dbReference type="PDB" id="1FAN">
    <property type="method" value="X-ray"/>
    <property type="resolution" value="2.00 A"/>
    <property type="chains" value="A=36-93"/>
</dbReference>
<dbReference type="PDB" id="1FY8">
    <property type="method" value="X-ray"/>
    <property type="resolution" value="1.70 A"/>
    <property type="chains" value="I=36-93"/>
</dbReference>
<dbReference type="PDB" id="1G6X">
    <property type="method" value="X-ray"/>
    <property type="resolution" value="0.86 A"/>
    <property type="chains" value="A=36-93"/>
</dbReference>
<dbReference type="PDB" id="1JV8">
    <property type="method" value="NMR"/>
    <property type="chains" value="A=36-93"/>
</dbReference>
<dbReference type="PDB" id="1JV9">
    <property type="method" value="NMR"/>
    <property type="chains" value="A=36-93"/>
</dbReference>
<dbReference type="PDB" id="1K09">
    <property type="method" value="NMR"/>
    <property type="chains" value="A/B=50-73"/>
</dbReference>
<dbReference type="PDB" id="1K6U">
    <property type="method" value="X-ray"/>
    <property type="resolution" value="1.00 A"/>
    <property type="chains" value="A=36-93"/>
</dbReference>
<dbReference type="PDB" id="1LD5">
    <property type="method" value="NMR"/>
    <property type="chains" value="A=36-93"/>
</dbReference>
<dbReference type="PDB" id="1LD6">
    <property type="method" value="NMR"/>
    <property type="chains" value="A=36-93"/>
</dbReference>
<dbReference type="PDB" id="1MTN">
    <property type="method" value="X-ray"/>
    <property type="resolution" value="2.80 A"/>
    <property type="chains" value="D/H=36-93"/>
</dbReference>
<dbReference type="PDB" id="1NAG">
    <property type="method" value="X-ray"/>
    <property type="resolution" value="1.90 A"/>
    <property type="chains" value="A=36-93"/>
</dbReference>
<dbReference type="PDB" id="1OA5">
    <property type="method" value="NMR"/>
    <property type="chains" value="5=36-93"/>
</dbReference>
<dbReference type="PDB" id="1OA6">
    <property type="method" value="NMR"/>
    <property type="chains" value="5=36-93"/>
</dbReference>
<dbReference type="PDB" id="1P2I">
    <property type="method" value="X-ray"/>
    <property type="resolution" value="1.65 A"/>
    <property type="chains" value="I=36-93"/>
</dbReference>
<dbReference type="PDB" id="1P2J">
    <property type="method" value="X-ray"/>
    <property type="resolution" value="1.35 A"/>
    <property type="chains" value="I=36-93"/>
</dbReference>
<dbReference type="PDB" id="1P2K">
    <property type="method" value="X-ray"/>
    <property type="resolution" value="1.60 A"/>
    <property type="chains" value="I=36-93"/>
</dbReference>
<dbReference type="PDB" id="1P2M">
    <property type="method" value="X-ray"/>
    <property type="resolution" value="1.75 A"/>
    <property type="chains" value="B/D=36-93"/>
</dbReference>
<dbReference type="PDB" id="1P2N">
    <property type="method" value="X-ray"/>
    <property type="resolution" value="1.80 A"/>
    <property type="chains" value="B/D=36-93"/>
</dbReference>
<dbReference type="PDB" id="1P2O">
    <property type="method" value="X-ray"/>
    <property type="resolution" value="2.00 A"/>
    <property type="chains" value="B/D=36-93"/>
</dbReference>
<dbReference type="PDB" id="1P2Q">
    <property type="method" value="X-ray"/>
    <property type="resolution" value="1.80 A"/>
    <property type="chains" value="B/D=36-93"/>
</dbReference>
<dbReference type="PDB" id="1PIT">
    <property type="method" value="NMR"/>
    <property type="chains" value="A=36-93"/>
</dbReference>
<dbReference type="PDB" id="1QLQ">
    <property type="method" value="X-ray"/>
    <property type="resolution" value="1.42 A"/>
    <property type="chains" value="A=36-93"/>
</dbReference>
<dbReference type="PDB" id="1T7C">
    <property type="method" value="X-ray"/>
    <property type="resolution" value="1.85 A"/>
    <property type="chains" value="B/D=36-93"/>
</dbReference>
<dbReference type="PDB" id="1T8L">
    <property type="method" value="X-ray"/>
    <property type="resolution" value="1.75 A"/>
    <property type="chains" value="B/D=36-93"/>
</dbReference>
<dbReference type="PDB" id="1T8M">
    <property type="method" value="X-ray"/>
    <property type="resolution" value="1.80 A"/>
    <property type="chains" value="B/D=36-93"/>
</dbReference>
<dbReference type="PDB" id="1T8N">
    <property type="method" value="X-ray"/>
    <property type="resolution" value="1.75 A"/>
    <property type="chains" value="B/D=36-93"/>
</dbReference>
<dbReference type="PDB" id="1T8O">
    <property type="method" value="X-ray"/>
    <property type="resolution" value="1.70 A"/>
    <property type="chains" value="B/D=36-93"/>
</dbReference>
<dbReference type="PDB" id="1TPA">
    <property type="method" value="X-ray"/>
    <property type="resolution" value="1.90 A"/>
    <property type="chains" value="I=36-93"/>
</dbReference>
<dbReference type="PDB" id="1UUA">
    <property type="method" value="NMR"/>
    <property type="chains" value="A=38-93"/>
</dbReference>
<dbReference type="PDB" id="1UUB">
    <property type="method" value="NMR"/>
    <property type="chains" value="A=38-93"/>
</dbReference>
<dbReference type="PDB" id="1YKT">
    <property type="method" value="X-ray"/>
    <property type="resolution" value="1.70 A"/>
    <property type="chains" value="B=36-91"/>
</dbReference>
<dbReference type="PDB" id="1YLC">
    <property type="method" value="X-ray"/>
    <property type="resolution" value="1.70 A"/>
    <property type="chains" value="B=36-91"/>
</dbReference>
<dbReference type="PDB" id="1YLD">
    <property type="method" value="X-ray"/>
    <property type="resolution" value="1.70 A"/>
    <property type="chains" value="B=36-91"/>
</dbReference>
<dbReference type="PDB" id="2FI3">
    <property type="method" value="X-ray"/>
    <property type="resolution" value="1.58 A"/>
    <property type="chains" value="I=36-93"/>
</dbReference>
<dbReference type="PDB" id="2FI4">
    <property type="method" value="X-ray"/>
    <property type="resolution" value="1.58 A"/>
    <property type="chains" value="I=36-93"/>
</dbReference>
<dbReference type="PDB" id="2FI5">
    <property type="method" value="X-ray"/>
    <property type="resolution" value="1.58 A"/>
    <property type="chains" value="I=36-93"/>
</dbReference>
<dbReference type="PDB" id="2FTL">
    <property type="method" value="X-ray"/>
    <property type="resolution" value="1.62 A"/>
    <property type="chains" value="I=36-93"/>
</dbReference>
<dbReference type="PDB" id="2FTM">
    <property type="method" value="X-ray"/>
    <property type="resolution" value="1.65 A"/>
    <property type="chains" value="B=36-93"/>
</dbReference>
<dbReference type="PDB" id="2HEX">
    <property type="method" value="X-ray"/>
    <property type="resolution" value="2.10 A"/>
    <property type="chains" value="A/B/C/D/E=36-93"/>
</dbReference>
<dbReference type="PDB" id="2IJO">
    <property type="method" value="X-ray"/>
    <property type="resolution" value="2.30 A"/>
    <property type="chains" value="I=36-93"/>
</dbReference>
<dbReference type="PDB" id="2KAI">
    <property type="method" value="X-ray"/>
    <property type="resolution" value="2.50 A"/>
    <property type="chains" value="I=36-93"/>
</dbReference>
<dbReference type="PDB" id="2PTC">
    <property type="method" value="X-ray"/>
    <property type="resolution" value="1.90 A"/>
    <property type="chains" value="I=36-93"/>
</dbReference>
<dbReference type="PDB" id="2R9P">
    <property type="method" value="X-ray"/>
    <property type="resolution" value="1.40 A"/>
    <property type="chains" value="E/F/G/I=36-93"/>
</dbReference>
<dbReference type="PDB" id="2RA3">
    <property type="method" value="X-ray"/>
    <property type="resolution" value="1.46 A"/>
    <property type="chains" value="C/I=36-93"/>
</dbReference>
<dbReference type="PDB" id="2TGP">
    <property type="method" value="X-ray"/>
    <property type="resolution" value="1.90 A"/>
    <property type="chains" value="I=36-93"/>
</dbReference>
<dbReference type="PDB" id="2TPI">
    <property type="method" value="X-ray"/>
    <property type="resolution" value="2.10 A"/>
    <property type="chains" value="I=36-93"/>
</dbReference>
<dbReference type="PDB" id="2ZJX">
    <property type="method" value="X-ray"/>
    <property type="resolution" value="1.09 A"/>
    <property type="chains" value="A/B=36-93"/>
</dbReference>
<dbReference type="PDB" id="2ZVX">
    <property type="method" value="X-ray"/>
    <property type="resolution" value="1.09 A"/>
    <property type="chains" value="A/B=36-93"/>
</dbReference>
<dbReference type="PDB" id="3BTD">
    <property type="method" value="X-ray"/>
    <property type="resolution" value="1.90 A"/>
    <property type="chains" value="I=36-93"/>
</dbReference>
<dbReference type="PDB" id="3BTE">
    <property type="method" value="X-ray"/>
    <property type="resolution" value="1.85 A"/>
    <property type="chains" value="I=36-93"/>
</dbReference>
<dbReference type="PDB" id="3BTF">
    <property type="method" value="X-ray"/>
    <property type="resolution" value="1.80 A"/>
    <property type="chains" value="I=36-93"/>
</dbReference>
<dbReference type="PDB" id="3BTG">
    <property type="method" value="X-ray"/>
    <property type="resolution" value="1.90 A"/>
    <property type="chains" value="I=36-93"/>
</dbReference>
<dbReference type="PDB" id="3BTH">
    <property type="method" value="X-ray"/>
    <property type="resolution" value="1.75 A"/>
    <property type="chains" value="I=36-93"/>
</dbReference>
<dbReference type="PDB" id="3BTK">
    <property type="method" value="X-ray"/>
    <property type="resolution" value="1.85 A"/>
    <property type="chains" value="I=36-93"/>
</dbReference>
<dbReference type="PDB" id="3BTM">
    <property type="method" value="X-ray"/>
    <property type="resolution" value="1.80 A"/>
    <property type="chains" value="I=36-93"/>
</dbReference>
<dbReference type="PDB" id="3BTQ">
    <property type="method" value="X-ray"/>
    <property type="resolution" value="1.90 A"/>
    <property type="chains" value="I=36-93"/>
</dbReference>
<dbReference type="PDB" id="3BTT">
    <property type="method" value="X-ray"/>
    <property type="resolution" value="1.90 A"/>
    <property type="chains" value="I=36-93"/>
</dbReference>
<dbReference type="PDB" id="3BTW">
    <property type="method" value="X-ray"/>
    <property type="resolution" value="2.05 A"/>
    <property type="chains" value="I=36-93"/>
</dbReference>
<dbReference type="PDB" id="3FP6">
    <property type="method" value="X-ray"/>
    <property type="resolution" value="1.49 A"/>
    <property type="chains" value="I=36-93"/>
</dbReference>
<dbReference type="PDB" id="3FP7">
    <property type="method" value="X-ray"/>
    <property type="resolution" value="1.46 A"/>
    <property type="chains" value="I=36-50, J=51-93"/>
</dbReference>
<dbReference type="PDB" id="3FP8">
    <property type="method" value="X-ray"/>
    <property type="resolution" value="1.46 A"/>
    <property type="chains" value="I=36-93"/>
</dbReference>
<dbReference type="PDB" id="3GYM">
    <property type="method" value="X-ray"/>
    <property type="resolution" value="2.80 A"/>
    <property type="chains" value="I/J=36-93"/>
</dbReference>
<dbReference type="PDB" id="3LDI">
    <property type="method" value="X-ray"/>
    <property type="resolution" value="2.20 A"/>
    <property type="chains" value="A/B/C/D/E=36-93"/>
</dbReference>
<dbReference type="PDB" id="3LDJ">
    <property type="method" value="X-ray"/>
    <property type="resolution" value="1.70 A"/>
    <property type="chains" value="A/B/C=36-93"/>
</dbReference>
<dbReference type="PDB" id="3LDM">
    <property type="method" value="X-ray"/>
    <property type="resolution" value="2.60 A"/>
    <property type="chains" value="A/B/C/D/E=36-93"/>
</dbReference>
<dbReference type="PDB" id="3OTJ">
    <property type="method" value="Other"/>
    <property type="resolution" value="2.15 A"/>
    <property type="chains" value="I=36-93"/>
</dbReference>
<dbReference type="PDB" id="3P92">
    <property type="method" value="X-ray"/>
    <property type="resolution" value="1.60 A"/>
    <property type="chains" value="E=36-93"/>
</dbReference>
<dbReference type="PDB" id="3P95">
    <property type="method" value="X-ray"/>
    <property type="resolution" value="1.30 A"/>
    <property type="chains" value="E=36-93"/>
</dbReference>
<dbReference type="PDB" id="3TGI">
    <property type="method" value="X-ray"/>
    <property type="resolution" value="1.80 A"/>
    <property type="chains" value="I=36-100"/>
</dbReference>
<dbReference type="PDB" id="3TGJ">
    <property type="method" value="X-ray"/>
    <property type="resolution" value="2.20 A"/>
    <property type="chains" value="I=36-100"/>
</dbReference>
<dbReference type="PDB" id="3TGK">
    <property type="method" value="X-ray"/>
    <property type="resolution" value="1.70 A"/>
    <property type="chains" value="I=36-100"/>
</dbReference>
<dbReference type="PDB" id="3TPI">
    <property type="method" value="X-ray"/>
    <property type="resolution" value="1.90 A"/>
    <property type="chains" value="I=36-93"/>
</dbReference>
<dbReference type="PDB" id="3U1J">
    <property type="method" value="X-ray"/>
    <property type="resolution" value="1.80 A"/>
    <property type="chains" value="E=36-93"/>
</dbReference>
<dbReference type="PDB" id="3WNY">
    <property type="method" value="X-ray"/>
    <property type="resolution" value="1.30 A"/>
    <property type="chains" value="A/B/C/E/F/G/H/I=36-95"/>
</dbReference>
<dbReference type="PDB" id="4BNR">
    <property type="method" value="X-ray"/>
    <property type="resolution" value="2.00 A"/>
    <property type="chains" value="I/J=1-100"/>
</dbReference>
<dbReference type="PDB" id="4DG4">
    <property type="method" value="X-ray"/>
    <property type="resolution" value="1.40 A"/>
    <property type="chains" value="C/E/F/H=36-93"/>
</dbReference>
<dbReference type="PDB" id="4PTI">
    <property type="method" value="X-ray"/>
    <property type="resolution" value="1.50 A"/>
    <property type="chains" value="A=36-93"/>
</dbReference>
<dbReference type="PDB" id="4TPI">
    <property type="method" value="X-ray"/>
    <property type="resolution" value="2.20 A"/>
    <property type="chains" value="I=36-93"/>
</dbReference>
<dbReference type="PDB" id="4WWY">
    <property type="method" value="X-ray"/>
    <property type="resolution" value="1.70 A"/>
    <property type="chains" value="C/I=36-93"/>
</dbReference>
<dbReference type="PDB" id="4WXV">
    <property type="method" value="X-ray"/>
    <property type="resolution" value="2.10 A"/>
    <property type="chains" value="C/I=36-90"/>
</dbReference>
<dbReference type="PDB" id="4Y0Y">
    <property type="method" value="X-ray"/>
    <property type="resolution" value="1.25 A"/>
    <property type="chains" value="I=36-93"/>
</dbReference>
<dbReference type="PDB" id="4Y0Z">
    <property type="method" value="X-ray"/>
    <property type="resolution" value="1.37 A"/>
    <property type="chains" value="I=36-93"/>
</dbReference>
<dbReference type="PDB" id="4Y10">
    <property type="method" value="X-ray"/>
    <property type="resolution" value="1.37 A"/>
    <property type="chains" value="I=36-93"/>
</dbReference>
<dbReference type="PDB" id="4Y11">
    <property type="method" value="X-ray"/>
    <property type="resolution" value="1.30 A"/>
    <property type="chains" value="I=36-93"/>
</dbReference>
<dbReference type="PDB" id="5JB4">
    <property type="method" value="X-ray"/>
    <property type="resolution" value="1.99 A"/>
    <property type="chains" value="A/B/C=36-93"/>
</dbReference>
<dbReference type="PDB" id="5JB5">
    <property type="method" value="X-ray"/>
    <property type="resolution" value="1.60 A"/>
    <property type="chains" value="A/B/C=36-93"/>
</dbReference>
<dbReference type="PDB" id="5JB6">
    <property type="method" value="X-ray"/>
    <property type="resolution" value="1.90 A"/>
    <property type="chains" value="A/B/C=36-93"/>
</dbReference>
<dbReference type="PDB" id="5JB7">
    <property type="method" value="X-ray"/>
    <property type="resolution" value="1.90 A"/>
    <property type="chains" value="A/B/C=36-93"/>
</dbReference>
<dbReference type="PDB" id="5PTI">
    <property type="method" value="X-ray"/>
    <property type="resolution" value="1.00 A"/>
    <property type="chains" value="A=36-93"/>
</dbReference>
<dbReference type="PDB" id="5XX2">
    <property type="method" value="X-ray"/>
    <property type="resolution" value="1.12 A"/>
    <property type="chains" value="A/B=36-93"/>
</dbReference>
<dbReference type="PDB" id="5XX3">
    <property type="method" value="X-ray"/>
    <property type="resolution" value="1.12 A"/>
    <property type="chains" value="A/B=36-93"/>
</dbReference>
<dbReference type="PDB" id="5XX4">
    <property type="method" value="X-ray"/>
    <property type="resolution" value="1.67 A"/>
    <property type="chains" value="A/B=36-93"/>
</dbReference>
<dbReference type="PDB" id="5XX5">
    <property type="method" value="X-ray"/>
    <property type="resolution" value="1.38 A"/>
    <property type="chains" value="A/B=36-93"/>
</dbReference>
<dbReference type="PDB" id="5XX6">
    <property type="method" value="X-ray"/>
    <property type="resolution" value="1.31 A"/>
    <property type="chains" value="A/B=36-93"/>
</dbReference>
<dbReference type="PDB" id="5XX7">
    <property type="method" value="X-ray"/>
    <property type="resolution" value="1.38 A"/>
    <property type="chains" value="A/D=36-93"/>
</dbReference>
<dbReference type="PDB" id="5XX8">
    <property type="method" value="X-ray"/>
    <property type="resolution" value="1.30 A"/>
    <property type="chains" value="A/B=36-93"/>
</dbReference>
<dbReference type="PDB" id="5YVU">
    <property type="method" value="X-ray"/>
    <property type="resolution" value="2.49 A"/>
    <property type="chains" value="I=36-90"/>
</dbReference>
<dbReference type="PDB" id="5YW1">
    <property type="method" value="X-ray"/>
    <property type="resolution" value="2.60 A"/>
    <property type="chains" value="I=36-90"/>
</dbReference>
<dbReference type="PDB" id="6F1F">
    <property type="method" value="X-ray"/>
    <property type="resolution" value="1.72 A"/>
    <property type="chains" value="A/B/C/D/E=36-93"/>
</dbReference>
<dbReference type="PDB" id="6PTI">
    <property type="method" value="X-ray"/>
    <property type="resolution" value="1.70 A"/>
    <property type="chains" value="A=36-93"/>
</dbReference>
<dbReference type="PDB" id="7PH1">
    <property type="method" value="X-ray"/>
    <property type="resolution" value="1.18 A"/>
    <property type="chains" value="I=37-93"/>
</dbReference>
<dbReference type="PDB" id="7PTI">
    <property type="method" value="X-ray"/>
    <property type="resolution" value="1.60 A"/>
    <property type="chains" value="A=36-93"/>
</dbReference>
<dbReference type="PDB" id="7QIQ">
    <property type="method" value="X-ray"/>
    <property type="resolution" value="1.85 A"/>
    <property type="chains" value="D/H=36-93"/>
</dbReference>
<dbReference type="PDB" id="7QIR">
    <property type="method" value="X-ray"/>
    <property type="resolution" value="1.90 A"/>
    <property type="chains" value="D/H=36-93"/>
</dbReference>
<dbReference type="PDB" id="7QIS">
    <property type="method" value="X-ray"/>
    <property type="resolution" value="1.83 A"/>
    <property type="chains" value="D/H=36-93"/>
</dbReference>
<dbReference type="PDB" id="7QIT">
    <property type="method" value="X-ray"/>
    <property type="resolution" value="1.99 A"/>
    <property type="chains" value="D/H=36-93"/>
</dbReference>
<dbReference type="PDB" id="8PTI">
    <property type="method" value="X-ray"/>
    <property type="resolution" value="1.80 A"/>
    <property type="chains" value="A=36-93"/>
</dbReference>
<dbReference type="PDB" id="9PTI">
    <property type="method" value="X-ray"/>
    <property type="resolution" value="1.22 A"/>
    <property type="chains" value="A=36-93"/>
</dbReference>
<dbReference type="PDBsum" id="1AAL"/>
<dbReference type="PDBsum" id="1B0C"/>
<dbReference type="PDBsum" id="1BHC"/>
<dbReference type="PDBsum" id="1BPI"/>
<dbReference type="PDBsum" id="1BPT"/>
<dbReference type="PDBsum" id="1BRB"/>
<dbReference type="PDBsum" id="1BTH"/>
<dbReference type="PDBsum" id="1BTI"/>
<dbReference type="PDBsum" id="1BZ5"/>
<dbReference type="PDBsum" id="1BZX"/>
<dbReference type="PDBsum" id="1CBW"/>
<dbReference type="PDBsum" id="1CO7"/>
<dbReference type="PDBsum" id="1D0D"/>
<dbReference type="PDBsum" id="1EAW"/>
<dbReference type="PDBsum" id="1EJM"/>
<dbReference type="PDBsum" id="1F5R"/>
<dbReference type="PDBsum" id="1F7Z"/>
<dbReference type="PDBsum" id="1FAK"/>
<dbReference type="PDBsum" id="1FAN"/>
<dbReference type="PDBsum" id="1FY8"/>
<dbReference type="PDBsum" id="1G6X"/>
<dbReference type="PDBsum" id="1JV8"/>
<dbReference type="PDBsum" id="1JV9"/>
<dbReference type="PDBsum" id="1K09"/>
<dbReference type="PDBsum" id="1K6U"/>
<dbReference type="PDBsum" id="1LD5"/>
<dbReference type="PDBsum" id="1LD6"/>
<dbReference type="PDBsum" id="1MTN"/>
<dbReference type="PDBsum" id="1NAG"/>
<dbReference type="PDBsum" id="1OA5"/>
<dbReference type="PDBsum" id="1OA6"/>
<dbReference type="PDBsum" id="1P2I"/>
<dbReference type="PDBsum" id="1P2J"/>
<dbReference type="PDBsum" id="1P2K"/>
<dbReference type="PDBsum" id="1P2M"/>
<dbReference type="PDBsum" id="1P2N"/>
<dbReference type="PDBsum" id="1P2O"/>
<dbReference type="PDBsum" id="1P2Q"/>
<dbReference type="PDBsum" id="1PIT"/>
<dbReference type="PDBsum" id="1QLQ"/>
<dbReference type="PDBsum" id="1T7C"/>
<dbReference type="PDBsum" id="1T8L"/>
<dbReference type="PDBsum" id="1T8M"/>
<dbReference type="PDBsum" id="1T8N"/>
<dbReference type="PDBsum" id="1T8O"/>
<dbReference type="PDBsum" id="1TPA"/>
<dbReference type="PDBsum" id="1UUA"/>
<dbReference type="PDBsum" id="1UUB"/>
<dbReference type="PDBsum" id="1YKT"/>
<dbReference type="PDBsum" id="1YLC"/>
<dbReference type="PDBsum" id="1YLD"/>
<dbReference type="PDBsum" id="2FI3"/>
<dbReference type="PDBsum" id="2FI4"/>
<dbReference type="PDBsum" id="2FI5"/>
<dbReference type="PDBsum" id="2FTL"/>
<dbReference type="PDBsum" id="2FTM"/>
<dbReference type="PDBsum" id="2HEX"/>
<dbReference type="PDBsum" id="2IJO"/>
<dbReference type="PDBsum" id="2KAI"/>
<dbReference type="PDBsum" id="2PTC"/>
<dbReference type="PDBsum" id="2R9P"/>
<dbReference type="PDBsum" id="2RA3"/>
<dbReference type="PDBsum" id="2TGP"/>
<dbReference type="PDBsum" id="2TPI"/>
<dbReference type="PDBsum" id="2ZJX"/>
<dbReference type="PDBsum" id="2ZVX"/>
<dbReference type="PDBsum" id="3BTD"/>
<dbReference type="PDBsum" id="3BTE"/>
<dbReference type="PDBsum" id="3BTF"/>
<dbReference type="PDBsum" id="3BTG"/>
<dbReference type="PDBsum" id="3BTH"/>
<dbReference type="PDBsum" id="3BTK"/>
<dbReference type="PDBsum" id="3BTM"/>
<dbReference type="PDBsum" id="3BTQ"/>
<dbReference type="PDBsum" id="3BTT"/>
<dbReference type="PDBsum" id="3BTW"/>
<dbReference type="PDBsum" id="3FP6"/>
<dbReference type="PDBsum" id="3FP7"/>
<dbReference type="PDBsum" id="3FP8"/>
<dbReference type="PDBsum" id="3GYM"/>
<dbReference type="PDBsum" id="3LDI"/>
<dbReference type="PDBsum" id="3LDJ"/>
<dbReference type="PDBsum" id="3LDM"/>
<dbReference type="PDBsum" id="3OTJ"/>
<dbReference type="PDBsum" id="3P92"/>
<dbReference type="PDBsum" id="3P95"/>
<dbReference type="PDBsum" id="3TGI"/>
<dbReference type="PDBsum" id="3TGJ"/>
<dbReference type="PDBsum" id="3TGK"/>
<dbReference type="PDBsum" id="3TPI"/>
<dbReference type="PDBsum" id="3U1J"/>
<dbReference type="PDBsum" id="3WNY"/>
<dbReference type="PDBsum" id="4BNR"/>
<dbReference type="PDBsum" id="4DG4"/>
<dbReference type="PDBsum" id="4PTI"/>
<dbReference type="PDBsum" id="4TPI"/>
<dbReference type="PDBsum" id="4WWY"/>
<dbReference type="PDBsum" id="4WXV"/>
<dbReference type="PDBsum" id="4Y0Y"/>
<dbReference type="PDBsum" id="4Y0Z"/>
<dbReference type="PDBsum" id="4Y10"/>
<dbReference type="PDBsum" id="4Y11"/>
<dbReference type="PDBsum" id="5JB4"/>
<dbReference type="PDBsum" id="5JB5"/>
<dbReference type="PDBsum" id="5JB6"/>
<dbReference type="PDBsum" id="5JB7"/>
<dbReference type="PDBsum" id="5PTI"/>
<dbReference type="PDBsum" id="5XX2"/>
<dbReference type="PDBsum" id="5XX3"/>
<dbReference type="PDBsum" id="5XX4"/>
<dbReference type="PDBsum" id="5XX5"/>
<dbReference type="PDBsum" id="5XX6"/>
<dbReference type="PDBsum" id="5XX7"/>
<dbReference type="PDBsum" id="5XX8"/>
<dbReference type="PDBsum" id="5YVU"/>
<dbReference type="PDBsum" id="5YW1"/>
<dbReference type="PDBsum" id="6F1F"/>
<dbReference type="PDBsum" id="6PTI"/>
<dbReference type="PDBsum" id="7PH1"/>
<dbReference type="PDBsum" id="7PTI"/>
<dbReference type="PDBsum" id="7QIQ"/>
<dbReference type="PDBsum" id="7QIR"/>
<dbReference type="PDBsum" id="7QIS"/>
<dbReference type="PDBsum" id="7QIT"/>
<dbReference type="PDBsum" id="8PTI"/>
<dbReference type="PDBsum" id="9PTI"/>
<dbReference type="BMRB" id="P00974"/>
<dbReference type="PCDDB" id="P00974"/>
<dbReference type="SASBDB" id="P00974"/>
<dbReference type="SMR" id="P00974"/>
<dbReference type="DIP" id="DIP-6113N"/>
<dbReference type="FunCoup" id="P00974">
    <property type="interactions" value="83"/>
</dbReference>
<dbReference type="IntAct" id="P00974">
    <property type="interactions" value="6"/>
</dbReference>
<dbReference type="MINT" id="P00974"/>
<dbReference type="STRING" id="9913.ENSBTAP00000056883"/>
<dbReference type="Allergome" id="3890">
    <property type="allergen name" value="Bos d TI"/>
</dbReference>
<dbReference type="MEROPS" id="I02.001"/>
<dbReference type="CPTAC" id="CPTAC-1472"/>
<dbReference type="PaxDb" id="9913-ENSBTAP00000018539"/>
<dbReference type="InParanoid" id="P00974"/>
<dbReference type="EvolutionaryTrace" id="P00974"/>
<dbReference type="Proteomes" id="UP000009136">
    <property type="component" value="Unplaced"/>
</dbReference>
<dbReference type="GO" id="GO:0005615">
    <property type="term" value="C:extracellular space"/>
    <property type="evidence" value="ECO:0000318"/>
    <property type="project" value="GO_Central"/>
</dbReference>
<dbReference type="GO" id="GO:0097180">
    <property type="term" value="C:serine protease inhibitor complex"/>
    <property type="evidence" value="ECO:0000314"/>
    <property type="project" value="CAFA"/>
</dbReference>
<dbReference type="GO" id="GO:0005509">
    <property type="term" value="F:calcium ion binding"/>
    <property type="evidence" value="ECO:0000314"/>
    <property type="project" value="CAFA"/>
</dbReference>
<dbReference type="GO" id="GO:0140678">
    <property type="term" value="F:molecular function inhibitor activity"/>
    <property type="evidence" value="ECO:0000269"/>
    <property type="project" value="DisProt"/>
</dbReference>
<dbReference type="GO" id="GO:0019870">
    <property type="term" value="F:potassium channel inhibitor activity"/>
    <property type="evidence" value="ECO:0000314"/>
    <property type="project" value="AgBase"/>
</dbReference>
<dbReference type="GO" id="GO:0002020">
    <property type="term" value="F:protease binding"/>
    <property type="evidence" value="ECO:0000314"/>
    <property type="project" value="CAFA"/>
</dbReference>
<dbReference type="GO" id="GO:0004867">
    <property type="term" value="F:serine-type endopeptidase inhibitor activity"/>
    <property type="evidence" value="ECO:0000314"/>
    <property type="project" value="CAFA"/>
</dbReference>
<dbReference type="GO" id="GO:0043199">
    <property type="term" value="F:sulfate binding"/>
    <property type="evidence" value="ECO:0000314"/>
    <property type="project" value="CAFA"/>
</dbReference>
<dbReference type="GO" id="GO:0035375">
    <property type="term" value="F:zymogen binding"/>
    <property type="evidence" value="ECO:0000314"/>
    <property type="project" value="CAFA"/>
</dbReference>
<dbReference type="GO" id="GO:0090331">
    <property type="term" value="P:negative regulation of platelet aggregation"/>
    <property type="evidence" value="ECO:0000314"/>
    <property type="project" value="CACAO"/>
</dbReference>
<dbReference type="GO" id="GO:1900004">
    <property type="term" value="P:negative regulation of serine-type endopeptidase activity"/>
    <property type="evidence" value="ECO:0000314"/>
    <property type="project" value="CAFA"/>
</dbReference>
<dbReference type="GO" id="GO:0070495">
    <property type="term" value="P:negative regulation of thrombin-activated receptor signaling pathway"/>
    <property type="evidence" value="ECO:0000314"/>
    <property type="project" value="CACAO"/>
</dbReference>
<dbReference type="GO" id="GO:0032023">
    <property type="term" value="P:trypsinogen activation"/>
    <property type="evidence" value="ECO:0000314"/>
    <property type="project" value="CAFA"/>
</dbReference>
<dbReference type="CDD" id="cd22592">
    <property type="entry name" value="Kunitz_BPTI"/>
    <property type="match status" value="1"/>
</dbReference>
<dbReference type="DisProt" id="DP00729"/>
<dbReference type="FunFam" id="4.10.410.10:FF:000005">
    <property type="entry name" value="Pancreatic trypsin inhibitor"/>
    <property type="match status" value="1"/>
</dbReference>
<dbReference type="Gene3D" id="4.10.410.10">
    <property type="entry name" value="Pancreatic trypsin inhibitor Kunitz domain"/>
    <property type="match status" value="1"/>
</dbReference>
<dbReference type="InterPro" id="IPR002223">
    <property type="entry name" value="Kunitz_BPTI"/>
</dbReference>
<dbReference type="InterPro" id="IPR036880">
    <property type="entry name" value="Kunitz_BPTI_sf"/>
</dbReference>
<dbReference type="InterPro" id="IPR020901">
    <property type="entry name" value="Prtase_inh_Kunz-CS"/>
</dbReference>
<dbReference type="InterPro" id="IPR050098">
    <property type="entry name" value="TFPI/VKTCI-like"/>
</dbReference>
<dbReference type="PANTHER" id="PTHR10083">
    <property type="entry name" value="KUNITZ-TYPE PROTEASE INHIBITOR-RELATED"/>
    <property type="match status" value="1"/>
</dbReference>
<dbReference type="PANTHER" id="PTHR10083:SF367">
    <property type="entry name" value="SPLEEN TRYPSIN INHIBITOR I"/>
    <property type="match status" value="1"/>
</dbReference>
<dbReference type="Pfam" id="PF00014">
    <property type="entry name" value="Kunitz_BPTI"/>
    <property type="match status" value="1"/>
</dbReference>
<dbReference type="PRINTS" id="PR00759">
    <property type="entry name" value="BASICPTASE"/>
</dbReference>
<dbReference type="SMART" id="SM00131">
    <property type="entry name" value="KU"/>
    <property type="match status" value="1"/>
</dbReference>
<dbReference type="SUPFAM" id="SSF57362">
    <property type="entry name" value="BPTI-like"/>
    <property type="match status" value="1"/>
</dbReference>
<dbReference type="PROSITE" id="PS00280">
    <property type="entry name" value="BPTI_KUNITZ_1"/>
    <property type="match status" value="1"/>
</dbReference>
<dbReference type="PROSITE" id="PS50279">
    <property type="entry name" value="BPTI_KUNITZ_2"/>
    <property type="match status" value="1"/>
</dbReference>
<keyword id="KW-0002">3D-structure</keyword>
<keyword id="KW-0903">Direct protein sequencing</keyword>
<keyword id="KW-1015">Disulfide bond</keyword>
<keyword id="KW-0582">Pharmaceutical</keyword>
<keyword id="KW-0646">Protease inhibitor</keyword>
<keyword id="KW-1185">Reference proteome</keyword>
<keyword id="KW-0964">Secreted</keyword>
<keyword id="KW-0722">Serine protease inhibitor</keyword>
<keyword id="KW-0732">Signal</keyword>
<name>BPT1_BOVIN</name>
<evidence type="ECO:0000255" key="1"/>
<evidence type="ECO:0000255" key="2">
    <source>
        <dbReference type="PROSITE-ProRule" id="PRU00031"/>
    </source>
</evidence>
<evidence type="ECO:0000269" key="3">
    <source>
    </source>
</evidence>
<evidence type="ECO:0007829" key="4">
    <source>
        <dbReference type="PDB" id="1G6X"/>
    </source>
</evidence>
<evidence type="ECO:0007829" key="5">
    <source>
        <dbReference type="PDB" id="1JV9"/>
    </source>
</evidence>
<evidence type="ECO:0007829" key="6">
    <source>
        <dbReference type="PDB" id="8PTI"/>
    </source>
</evidence>
<protein>
    <recommendedName>
        <fullName>Pancreatic trypsin inhibitor</fullName>
    </recommendedName>
    <alternativeName>
        <fullName>Aprotinin</fullName>
    </alternativeName>
    <alternativeName>
        <fullName>Basic protease inhibitor</fullName>
        <shortName>BPI</shortName>
        <shortName>BPTI</shortName>
    </alternativeName>
</protein>
<accession>P00974</accession>
<sequence length="100" mass="10903">MKMSRLCLSVALLVLLGTLAASTPGCDTSNQAKAQRPDFCLEPPYTGPCKARIIRYFYNAKAGLCQTFVYGGCRAKRNNFKSAEDCMRTCGGAIGPWENL</sequence>
<comment type="function">
    <text>Inhibits trypsin, kallikrein, chymotrypsin, and plasmin.</text>
</comment>
<comment type="interaction">
    <interactant intactId="EBI-1032263">
        <id>P00974</id>
    </interactant>
    <interactant intactId="EBI-986385">
        <id>P00760</id>
        <label>PRSS1</label>
    </interactant>
    <organismsDiffer>false</organismsDiffer>
    <experiments>4</experiments>
</comment>
<comment type="interaction">
    <interactant intactId="EBI-1032263">
        <id>P00974</id>
    </interactant>
    <interactant intactId="EBI-8755401">
        <id>Q52V24</id>
    </interactant>
    <organismsDiffer>true</organismsDiffer>
    <experiments>5</experiments>
</comment>
<comment type="subcellular location">
    <subcellularLocation>
        <location>Secreted</location>
    </subcellularLocation>
</comment>
<comment type="pharmaceutical">
    <text>Previously available under the name Trasylol (Mile). Used for inhibiting coagulation so as to reduce blood loss during bypass surgery.</text>
</comment>
<proteinExistence type="evidence at protein level"/>